<gene>
    <name evidence="44" type="primary">ZFP36</name>
    <name type="synonym">G0S24</name>
    <name evidence="1" type="synonym">NUP475</name>
    <name type="synonym">RNF162A</name>
    <name type="synonym">TIS11A</name>
    <name evidence="42" type="synonym">TTP</name>
</gene>
<accession>P26651</accession>
<accession>B2RA54</accession>
<proteinExistence type="evidence at protein level"/>
<dbReference type="EMBL" id="M92843">
    <property type="protein sequence ID" value="AAA58489.1"/>
    <property type="molecule type" value="mRNA"/>
</dbReference>
<dbReference type="EMBL" id="M92844">
    <property type="protein sequence ID" value="AAC37600.1"/>
    <property type="molecule type" value="Genomic_DNA"/>
</dbReference>
<dbReference type="EMBL" id="M63625">
    <property type="protein sequence ID" value="AAA61240.1"/>
    <property type="molecule type" value="mRNA"/>
</dbReference>
<dbReference type="EMBL" id="AK314042">
    <property type="protein sequence ID" value="BAG36751.1"/>
    <property type="molecule type" value="mRNA"/>
</dbReference>
<dbReference type="EMBL" id="AY771351">
    <property type="protein sequence ID" value="AAV28731.1"/>
    <property type="molecule type" value="Genomic_DNA"/>
</dbReference>
<dbReference type="EMBL" id="BC009693">
    <property type="protein sequence ID" value="AAH09693.1"/>
    <property type="molecule type" value="mRNA"/>
</dbReference>
<dbReference type="CCDS" id="CCDS12534.3"/>
<dbReference type="PIR" id="S34427">
    <property type="entry name" value="S34427"/>
</dbReference>
<dbReference type="RefSeq" id="NP_003398.3">
    <property type="nucleotide sequence ID" value="NM_003407.5"/>
</dbReference>
<dbReference type="PDB" id="4J8S">
    <property type="method" value="X-ray"/>
    <property type="resolution" value="1.55 A"/>
    <property type="chains" value="B=312-326"/>
</dbReference>
<dbReference type="PDBsum" id="4J8S"/>
<dbReference type="SMR" id="P26651"/>
<dbReference type="BioGRID" id="113370">
    <property type="interactions" value="175"/>
</dbReference>
<dbReference type="CORUM" id="P26651"/>
<dbReference type="DIP" id="DIP-29845N"/>
<dbReference type="FunCoup" id="P26651">
    <property type="interactions" value="418"/>
</dbReference>
<dbReference type="IntAct" id="P26651">
    <property type="interactions" value="32"/>
</dbReference>
<dbReference type="STRING" id="9606.ENSP00000471239"/>
<dbReference type="iPTMnet" id="P26651"/>
<dbReference type="PhosphoSitePlus" id="P26651"/>
<dbReference type="BioMuta" id="ZFP36"/>
<dbReference type="DMDM" id="136471"/>
<dbReference type="jPOST" id="P26651"/>
<dbReference type="MassIVE" id="P26651"/>
<dbReference type="PaxDb" id="9606-ENSP00000469647"/>
<dbReference type="PeptideAtlas" id="P26651"/>
<dbReference type="ProteomicsDB" id="54360"/>
<dbReference type="Antibodypedia" id="1121">
    <property type="antibodies" value="398 antibodies from 26 providers"/>
</dbReference>
<dbReference type="DNASU" id="7538"/>
<dbReference type="Ensembl" id="ENST00000597629.3">
    <property type="protein sequence ID" value="ENSP00000469647.2"/>
    <property type="gene ID" value="ENSG00000128016.8"/>
</dbReference>
<dbReference type="GeneID" id="7538"/>
<dbReference type="KEGG" id="hsa:7538"/>
<dbReference type="MANE-Select" id="ENST00000597629.3">
    <property type="protein sequence ID" value="ENSP00000469647.2"/>
    <property type="RefSeq nucleotide sequence ID" value="NM_003407.5"/>
    <property type="RefSeq protein sequence ID" value="NP_003398.3"/>
</dbReference>
<dbReference type="AGR" id="HGNC:12862"/>
<dbReference type="CTD" id="7538"/>
<dbReference type="DisGeNET" id="7538"/>
<dbReference type="GeneCards" id="ZFP36"/>
<dbReference type="HGNC" id="HGNC:12862">
    <property type="gene designation" value="ZFP36"/>
</dbReference>
<dbReference type="HPA" id="ENSG00000128016">
    <property type="expression patterns" value="Low tissue specificity"/>
</dbReference>
<dbReference type="MIM" id="190700">
    <property type="type" value="gene"/>
</dbReference>
<dbReference type="neXtProt" id="NX_P26651"/>
<dbReference type="OpenTargets" id="ENSG00000128016"/>
<dbReference type="PharmGKB" id="PA37451"/>
<dbReference type="VEuPathDB" id="HostDB:ENSG00000128016"/>
<dbReference type="eggNOG" id="KOG1677">
    <property type="taxonomic scope" value="Eukaryota"/>
</dbReference>
<dbReference type="GeneTree" id="ENSGT00940000162360"/>
<dbReference type="InParanoid" id="P26651"/>
<dbReference type="OMA" id="VFDQHPV"/>
<dbReference type="OrthoDB" id="410307at2759"/>
<dbReference type="PAN-GO" id="P26651">
    <property type="GO annotations" value="0 GO annotations based on evolutionary models"/>
</dbReference>
<dbReference type="PhylomeDB" id="P26651"/>
<dbReference type="TreeFam" id="TF315463"/>
<dbReference type="PathwayCommons" id="P26651"/>
<dbReference type="Reactome" id="R-HSA-450513">
    <property type="pathway name" value="Tristetraprolin (TTP, ZFP36) binds and destabilizes mRNA"/>
</dbReference>
<dbReference type="SignaLink" id="P26651"/>
<dbReference type="SIGNOR" id="P26651"/>
<dbReference type="BioGRID-ORCS" id="7538">
    <property type="hits" value="33 hits in 1172 CRISPR screens"/>
</dbReference>
<dbReference type="CD-CODE" id="232F8A39">
    <property type="entry name" value="P-body"/>
</dbReference>
<dbReference type="CD-CODE" id="DEE660B4">
    <property type="entry name" value="Stress granule"/>
</dbReference>
<dbReference type="ChiTaRS" id="ZFP36">
    <property type="organism name" value="human"/>
</dbReference>
<dbReference type="EvolutionaryTrace" id="P26651"/>
<dbReference type="GeneWiki" id="ZFP36"/>
<dbReference type="GenomeRNAi" id="7538"/>
<dbReference type="Pharos" id="P26651">
    <property type="development level" value="Tbio"/>
</dbReference>
<dbReference type="PRO" id="PR:P26651"/>
<dbReference type="Proteomes" id="UP000005640">
    <property type="component" value="Chromosome 19"/>
</dbReference>
<dbReference type="RNAct" id="P26651">
    <property type="molecule type" value="protein"/>
</dbReference>
<dbReference type="Bgee" id="ENSG00000128016">
    <property type="expression patterns" value="Expressed in vena cava and 207 other cell types or tissues"/>
</dbReference>
<dbReference type="ExpressionAtlas" id="P26651">
    <property type="expression patterns" value="baseline and differential"/>
</dbReference>
<dbReference type="GO" id="GO:0005737">
    <property type="term" value="C:cytoplasm"/>
    <property type="evidence" value="ECO:0000314"/>
    <property type="project" value="UniProtKB"/>
</dbReference>
<dbReference type="GO" id="GO:0010494">
    <property type="term" value="C:cytoplasmic stress granule"/>
    <property type="evidence" value="ECO:0000314"/>
    <property type="project" value="UniProtKB"/>
</dbReference>
<dbReference type="GO" id="GO:0005829">
    <property type="term" value="C:cytosol"/>
    <property type="evidence" value="ECO:0000314"/>
    <property type="project" value="MGI"/>
</dbReference>
<dbReference type="GO" id="GO:0005634">
    <property type="term" value="C:nucleus"/>
    <property type="evidence" value="ECO:0000314"/>
    <property type="project" value="UniProtKB"/>
</dbReference>
<dbReference type="GO" id="GO:0000932">
    <property type="term" value="C:P-body"/>
    <property type="evidence" value="ECO:0000314"/>
    <property type="project" value="UniProtKB"/>
</dbReference>
<dbReference type="GO" id="GO:1990904">
    <property type="term" value="C:ribonucleoprotein complex"/>
    <property type="evidence" value="ECO:0000314"/>
    <property type="project" value="UniProtKB"/>
</dbReference>
<dbReference type="GO" id="GO:0071889">
    <property type="term" value="F:14-3-3 protein binding"/>
    <property type="evidence" value="ECO:0000314"/>
    <property type="project" value="UniProtKB"/>
</dbReference>
<dbReference type="GO" id="GO:0019957">
    <property type="term" value="F:C-C chemokine binding"/>
    <property type="evidence" value="ECO:0000353"/>
    <property type="project" value="UniProtKB"/>
</dbReference>
<dbReference type="GO" id="GO:0003677">
    <property type="term" value="F:DNA binding"/>
    <property type="evidence" value="ECO:0007669"/>
    <property type="project" value="UniProtKB-KW"/>
</dbReference>
<dbReference type="GO" id="GO:0019899">
    <property type="term" value="F:enzyme binding"/>
    <property type="evidence" value="ECO:0000353"/>
    <property type="project" value="BHF-UCL"/>
</dbReference>
<dbReference type="GO" id="GO:0031072">
    <property type="term" value="F:heat shock protein binding"/>
    <property type="evidence" value="ECO:0000314"/>
    <property type="project" value="UniProtKB"/>
</dbReference>
<dbReference type="GO" id="GO:0035925">
    <property type="term" value="F:mRNA 3'-UTR AU-rich region binding"/>
    <property type="evidence" value="ECO:0000314"/>
    <property type="project" value="UniProtKB"/>
</dbReference>
<dbReference type="GO" id="GO:0003729">
    <property type="term" value="F:mRNA binding"/>
    <property type="evidence" value="ECO:0000314"/>
    <property type="project" value="UniProtKB"/>
</dbReference>
<dbReference type="GO" id="GO:0019901">
    <property type="term" value="F:protein kinase binding"/>
    <property type="evidence" value="ECO:0000353"/>
    <property type="project" value="UniProtKB"/>
</dbReference>
<dbReference type="GO" id="GO:0044877">
    <property type="term" value="F:protein-containing complex binding"/>
    <property type="evidence" value="ECO:0000353"/>
    <property type="project" value="GO_Central"/>
</dbReference>
<dbReference type="GO" id="GO:0160134">
    <property type="term" value="F:protein-RNA sequence-specific adaptor activity"/>
    <property type="evidence" value="ECO:0000314"/>
    <property type="project" value="UniProt"/>
</dbReference>
<dbReference type="GO" id="GO:0003723">
    <property type="term" value="F:RNA binding"/>
    <property type="evidence" value="ECO:0007005"/>
    <property type="project" value="UniProtKB"/>
</dbReference>
<dbReference type="GO" id="GO:0070063">
    <property type="term" value="F:RNA polymerase binding"/>
    <property type="evidence" value="ECO:0000250"/>
    <property type="project" value="UniProtKB"/>
</dbReference>
<dbReference type="GO" id="GO:0008270">
    <property type="term" value="F:zinc ion binding"/>
    <property type="evidence" value="ECO:0007669"/>
    <property type="project" value="UniProtKB-KW"/>
</dbReference>
<dbReference type="GO" id="GO:0061158">
    <property type="term" value="P:3'-UTR-mediated mRNA destabilization"/>
    <property type="evidence" value="ECO:0000314"/>
    <property type="project" value="UniProtKB"/>
</dbReference>
<dbReference type="GO" id="GO:0070935">
    <property type="term" value="P:3'-UTR-mediated mRNA stabilization"/>
    <property type="evidence" value="ECO:0000314"/>
    <property type="project" value="UniProtKB"/>
</dbReference>
<dbReference type="GO" id="GO:0071364">
    <property type="term" value="P:cellular response to epidermal growth factor stimulus"/>
    <property type="evidence" value="ECO:0000314"/>
    <property type="project" value="UniProtKB"/>
</dbReference>
<dbReference type="GO" id="GO:0044344">
    <property type="term" value="P:cellular response to fibroblast growth factor stimulus"/>
    <property type="evidence" value="ECO:0000314"/>
    <property type="project" value="UniProtKB"/>
</dbReference>
<dbReference type="GO" id="GO:0071385">
    <property type="term" value="P:cellular response to glucocorticoid stimulus"/>
    <property type="evidence" value="ECO:0000314"/>
    <property type="project" value="UniProtKB"/>
</dbReference>
<dbReference type="GO" id="GO:0097011">
    <property type="term" value="P:cellular response to granulocyte macrophage colony-stimulating factor stimulus"/>
    <property type="evidence" value="ECO:0000314"/>
    <property type="project" value="UniProtKB"/>
</dbReference>
<dbReference type="GO" id="GO:0071222">
    <property type="term" value="P:cellular response to lipopolysaccharide"/>
    <property type="evidence" value="ECO:0000314"/>
    <property type="project" value="UniProtKB"/>
</dbReference>
<dbReference type="GO" id="GO:0071356">
    <property type="term" value="P:cellular response to tumor necrosis factor"/>
    <property type="evidence" value="ECO:0000314"/>
    <property type="project" value="UniProtKB"/>
</dbReference>
<dbReference type="GO" id="GO:0000165">
    <property type="term" value="P:MAPK cascade"/>
    <property type="evidence" value="ECO:0000315"/>
    <property type="project" value="UniProtKB"/>
</dbReference>
<dbReference type="GO" id="GO:0035278">
    <property type="term" value="P:miRNA-mediated gene silencing by inhibition of translation"/>
    <property type="evidence" value="ECO:0000250"/>
    <property type="project" value="UniProtKB"/>
</dbReference>
<dbReference type="GO" id="GO:0006402">
    <property type="term" value="P:mRNA catabolic process"/>
    <property type="evidence" value="ECO:0000314"/>
    <property type="project" value="UniProtKB"/>
</dbReference>
<dbReference type="GO" id="GO:0051028">
    <property type="term" value="P:mRNA transport"/>
    <property type="evidence" value="ECO:0000315"/>
    <property type="project" value="UniProtKB"/>
</dbReference>
<dbReference type="GO" id="GO:1905869">
    <property type="term" value="P:negative regulation of 3'-UTR-mediated mRNA stabilization"/>
    <property type="evidence" value="ECO:0000314"/>
    <property type="project" value="UniProt"/>
</dbReference>
<dbReference type="GO" id="GO:1900016">
    <property type="term" value="P:negative regulation of cytokine production involved in inflammatory response"/>
    <property type="evidence" value="ECO:0000314"/>
    <property type="project" value="UniProt"/>
</dbReference>
<dbReference type="GO" id="GO:0045647">
    <property type="term" value="P:negative regulation of erythrocyte differentiation"/>
    <property type="evidence" value="ECO:0000314"/>
    <property type="project" value="UniProtKB"/>
</dbReference>
<dbReference type="GO" id="GO:0032703">
    <property type="term" value="P:negative regulation of interleukin-2 production"/>
    <property type="evidence" value="ECO:0000250"/>
    <property type="project" value="UniProtKB"/>
</dbReference>
<dbReference type="GO" id="GO:1904246">
    <property type="term" value="P:negative regulation of polynucleotide adenylyltransferase activity"/>
    <property type="evidence" value="ECO:0000250"/>
    <property type="project" value="UniProtKB"/>
</dbReference>
<dbReference type="GO" id="GO:0000122">
    <property type="term" value="P:negative regulation of transcription by RNA polymerase II"/>
    <property type="evidence" value="ECO:0000315"/>
    <property type="project" value="UniProtKB"/>
</dbReference>
<dbReference type="GO" id="GO:0032897">
    <property type="term" value="P:negative regulation of viral transcription"/>
    <property type="evidence" value="ECO:0000315"/>
    <property type="project" value="UniProtKB"/>
</dbReference>
<dbReference type="GO" id="GO:0000288">
    <property type="term" value="P:nuclear-transcribed mRNA catabolic process, deadenylation-dependent decay"/>
    <property type="evidence" value="ECO:0000314"/>
    <property type="project" value="UniProtKB"/>
</dbReference>
<dbReference type="GO" id="GO:0031086">
    <property type="term" value="P:nuclear-transcribed mRNA catabolic process, deadenylation-independent decay"/>
    <property type="evidence" value="ECO:0000314"/>
    <property type="project" value="UniProtKB"/>
</dbReference>
<dbReference type="GO" id="GO:0000289">
    <property type="term" value="P:nuclear-transcribed mRNA poly(A) tail shortening"/>
    <property type="evidence" value="ECO:0000315"/>
    <property type="project" value="BHF-UCL"/>
</dbReference>
<dbReference type="GO" id="GO:0038066">
    <property type="term" value="P:p38MAPK cascade"/>
    <property type="evidence" value="ECO:0000250"/>
    <property type="project" value="UniProtKB"/>
</dbReference>
<dbReference type="GO" id="GO:1901835">
    <property type="term" value="P:positive regulation of deadenylation-independent decapping of nuclear-transcribed mRNA"/>
    <property type="evidence" value="ECO:0000314"/>
    <property type="project" value="UniProtKB"/>
</dbReference>
<dbReference type="GO" id="GO:0045600">
    <property type="term" value="P:positive regulation of fat cell differentiation"/>
    <property type="evidence" value="ECO:0000250"/>
    <property type="project" value="UniProtKB"/>
</dbReference>
<dbReference type="GO" id="GO:1904582">
    <property type="term" value="P:positive regulation of intracellular mRNA localization"/>
    <property type="evidence" value="ECO:0000315"/>
    <property type="project" value="UniProtKB"/>
</dbReference>
<dbReference type="GO" id="GO:2000637">
    <property type="term" value="P:positive regulation of miRNA-mediated gene silencing"/>
    <property type="evidence" value="ECO:0000315"/>
    <property type="project" value="UniProtKB"/>
</dbReference>
<dbReference type="GO" id="GO:1900153">
    <property type="term" value="P:positive regulation of nuclear-transcribed mRNA catabolic process, deadenylation-dependent decay"/>
    <property type="evidence" value="ECO:0000314"/>
    <property type="project" value="UniProtKB"/>
</dbReference>
<dbReference type="GO" id="GO:0060213">
    <property type="term" value="P:positive regulation of nuclear-transcribed mRNA poly(A) tail shortening"/>
    <property type="evidence" value="ECO:0000314"/>
    <property type="project" value="UniProtKB"/>
</dbReference>
<dbReference type="GO" id="GO:1902172">
    <property type="term" value="P:regulation of keratinocyte apoptotic process"/>
    <property type="evidence" value="ECO:0000315"/>
    <property type="project" value="UniProtKB"/>
</dbReference>
<dbReference type="GO" id="GO:0045616">
    <property type="term" value="P:regulation of keratinocyte differentiation"/>
    <property type="evidence" value="ECO:0000315"/>
    <property type="project" value="UniProtKB"/>
</dbReference>
<dbReference type="GO" id="GO:0010837">
    <property type="term" value="P:regulation of keratinocyte proliferation"/>
    <property type="evidence" value="ECO:0000315"/>
    <property type="project" value="UniProtKB"/>
</dbReference>
<dbReference type="GO" id="GO:0043488">
    <property type="term" value="P:regulation of mRNA stability"/>
    <property type="evidence" value="ECO:0000314"/>
    <property type="project" value="UniProtKB"/>
</dbReference>
<dbReference type="GO" id="GO:0032680">
    <property type="term" value="P:regulation of tumor necrosis factor production"/>
    <property type="evidence" value="ECO:0000314"/>
    <property type="project" value="UniProtKB"/>
</dbReference>
<dbReference type="GO" id="GO:0042594">
    <property type="term" value="P:response to starvation"/>
    <property type="evidence" value="ECO:0000314"/>
    <property type="project" value="UniProtKB"/>
</dbReference>
<dbReference type="GO" id="GO:0009611">
    <property type="term" value="P:response to wounding"/>
    <property type="evidence" value="ECO:0000314"/>
    <property type="project" value="UniProtKB"/>
</dbReference>
<dbReference type="FunFam" id="4.10.1000.10:FF:000001">
    <property type="entry name" value="zinc finger CCCH domain-containing protein 15-like"/>
    <property type="match status" value="1"/>
</dbReference>
<dbReference type="FunFam" id="4.10.1000.10:FF:000002">
    <property type="entry name" value="Zinc finger protein 36, C3H1 type-like 1"/>
    <property type="match status" value="1"/>
</dbReference>
<dbReference type="Gene3D" id="4.10.1000.10">
    <property type="entry name" value="Zinc finger, CCCH-type"/>
    <property type="match status" value="2"/>
</dbReference>
<dbReference type="IDEAL" id="IID00655"/>
<dbReference type="InterPro" id="IPR045877">
    <property type="entry name" value="ZFP36-like"/>
</dbReference>
<dbReference type="InterPro" id="IPR000571">
    <property type="entry name" value="Znf_CCCH"/>
</dbReference>
<dbReference type="InterPro" id="IPR036855">
    <property type="entry name" value="Znf_CCCH_sf"/>
</dbReference>
<dbReference type="PANTHER" id="PTHR12547">
    <property type="entry name" value="CCCH ZINC FINGER/TIS11-RELATED"/>
    <property type="match status" value="1"/>
</dbReference>
<dbReference type="PANTHER" id="PTHR12547:SF58">
    <property type="entry name" value="MRNA DECAY ACTIVATOR PROTEIN ZFP36"/>
    <property type="match status" value="1"/>
</dbReference>
<dbReference type="Pfam" id="PF00642">
    <property type="entry name" value="zf-CCCH"/>
    <property type="match status" value="2"/>
</dbReference>
<dbReference type="SMART" id="SM00356">
    <property type="entry name" value="ZnF_C3H1"/>
    <property type="match status" value="2"/>
</dbReference>
<dbReference type="SUPFAM" id="SSF90229">
    <property type="entry name" value="CCCH zinc finger"/>
    <property type="match status" value="2"/>
</dbReference>
<dbReference type="PROSITE" id="PS50103">
    <property type="entry name" value="ZF_C3H1"/>
    <property type="match status" value="2"/>
</dbReference>
<feature type="chain" id="PRO_0000089163" description="mRNA decay activator protein ZFP36">
    <location>
        <begin position="1"/>
        <end position="326"/>
    </location>
</feature>
<feature type="repeat" description="P-P-P-P-G">
    <location>
        <begin position="71"/>
        <end position="75"/>
    </location>
</feature>
<feature type="repeat" description="P-P-P-P-G">
    <location>
        <begin position="198"/>
        <end position="202"/>
    </location>
</feature>
<feature type="repeat" description="P-P-P-P-G">
    <location>
        <begin position="219"/>
        <end position="223"/>
    </location>
</feature>
<feature type="zinc finger region" description="C3H1-type 1" evidence="3">
    <location>
        <begin position="103"/>
        <end position="131"/>
    </location>
</feature>
<feature type="zinc finger region" description="C3H1-type 2" evidence="3">
    <location>
        <begin position="141"/>
        <end position="169"/>
    </location>
</feature>
<feature type="region of interest" description="Necessary for localization of ARE-containing mRNAs to processing bodies (PBs)" evidence="24">
    <location>
        <begin position="1"/>
        <end position="174"/>
    </location>
</feature>
<feature type="region of interest" description="Necessary and sufficient for the association with mRNA decay enzymes and mRNA decay activation" evidence="16">
    <location>
        <begin position="1"/>
        <end position="100"/>
    </location>
</feature>
<feature type="region of interest" description="Necessary for nuclear export" evidence="2">
    <location>
        <begin position="1"/>
        <end position="15"/>
    </location>
</feature>
<feature type="region of interest" description="Disordered" evidence="4">
    <location>
        <begin position="13"/>
        <end position="66"/>
    </location>
</feature>
<feature type="region of interest" description="Disordered" evidence="4">
    <location>
        <begin position="78"/>
        <end position="102"/>
    </location>
</feature>
<feature type="region of interest" description="Necessary for nuclear localization" evidence="2">
    <location>
        <begin position="95"/>
        <end position="168"/>
    </location>
</feature>
<feature type="region of interest" description="Necessary for RNA-binding" evidence="6 10">
    <location>
        <begin position="97"/>
        <end position="173"/>
    </location>
</feature>
<feature type="region of interest" description="Necessary for localization of ARE-containing mRNAs to processing bodies (PBs)" evidence="24">
    <location>
        <begin position="100"/>
        <end position="326"/>
    </location>
</feature>
<feature type="region of interest" description="Necessary for interaction with PABPN1" evidence="1">
    <location>
        <begin position="103"/>
        <end position="194"/>
    </location>
</feature>
<feature type="region of interest" description="Necessary for mRNA decay activation" evidence="16">
    <location>
        <begin position="174"/>
        <end position="326"/>
    </location>
</feature>
<feature type="region of interest" description="Disordered" evidence="4">
    <location>
        <begin position="175"/>
        <end position="245"/>
    </location>
</feature>
<feature type="region of interest" description="Disordered" evidence="4">
    <location>
        <begin position="273"/>
        <end position="292"/>
    </location>
</feature>
<feature type="region of interest" description="Interaction with CNOT1" evidence="33">
    <location>
        <begin position="312"/>
        <end position="326"/>
    </location>
</feature>
<feature type="compositionally biased region" description="Low complexity" evidence="4">
    <location>
        <begin position="28"/>
        <end position="49"/>
    </location>
</feature>
<feature type="compositionally biased region" description="Low complexity" evidence="4">
    <location>
        <begin position="204"/>
        <end position="216"/>
    </location>
</feature>
<feature type="modified residue" description="Phosphoserine; by MAPKAPK2" evidence="1">
    <location>
        <position position="60"/>
    </location>
</feature>
<feature type="modified residue" description="Phosphoserine" evidence="19 28">
    <location>
        <position position="66"/>
    </location>
</feature>
<feature type="modified residue" description="Phosphoserine" evidence="19">
    <location>
        <position position="88"/>
    </location>
</feature>
<feature type="modified residue" description="Phosphoserine" evidence="1">
    <location>
        <position position="90"/>
    </location>
</feature>
<feature type="modified residue" description="Phosphothreonine" evidence="19">
    <location>
        <position position="92"/>
    </location>
</feature>
<feature type="modified residue" description="Phosphoserine" evidence="28 46">
    <location>
        <position position="93"/>
    </location>
</feature>
<feature type="modified residue" description="Phosphoserine" evidence="19">
    <location>
        <position position="169"/>
    </location>
</feature>
<feature type="modified residue" description="Phosphoserine; by MAPKAPK2" evidence="19 45 46">
    <location>
        <position position="186"/>
    </location>
</feature>
<feature type="modified residue" description="Phosphoserine" evidence="19">
    <location>
        <position position="197"/>
    </location>
</feature>
<feature type="modified residue" description="Phosphoserine" evidence="19">
    <location>
        <position position="218"/>
    </location>
</feature>
<feature type="modified residue" description="Phosphoserine; by MAPK1; in vitro" evidence="19">
    <location>
        <position position="228"/>
    </location>
</feature>
<feature type="modified residue" description="Phosphoserine" evidence="19">
    <location>
        <position position="276"/>
    </location>
</feature>
<feature type="modified residue" description="Phosphoserine" evidence="19">
    <location>
        <position position="296"/>
    </location>
</feature>
<feature type="modified residue" description="Phosphoserine" evidence="46">
    <location>
        <position position="323"/>
    </location>
</feature>
<feature type="sequence variant" id="VAR_021064" description="In dbSNP:rs17878633." evidence="41">
    <original>P</original>
    <variation>S</variation>
    <location>
        <position position="37"/>
    </location>
</feature>
<feature type="sequence variant" id="VAR_052324" description="In dbSNP:rs2229272.">
    <original>P</original>
    <variation>S</variation>
    <location>
        <position position="55"/>
    </location>
</feature>
<feature type="sequence variant" id="VAR_021065" description="In dbSNP:rs17886974." evidence="41">
    <original>I</original>
    <variation>F</variation>
    <location>
        <position position="259"/>
    </location>
</feature>
<feature type="sequence variant" id="VAR_021066" description="In dbSNP:rs17884899." evidence="41">
    <original>V</original>
    <variation>F</variation>
    <location>
        <position position="324"/>
    </location>
</feature>
<feature type="mutagenesis site" description="Inhibits PKM-induced ZFP36 degradation through a p38 MAPK signaling pathway." evidence="36">
    <original>S</original>
    <variation>A</variation>
    <location>
        <position position="60"/>
    </location>
</feature>
<feature type="mutagenesis site" description="Inhibits binding to ARE-containing transcripts. Inhibits binding to and deadenylation activities of ARE-containing mRNAs. Inhibits localization of ARE-containing mRNAs to processing bodies (PBs)." evidence="5 10 23 24 26">
    <original>C</original>
    <variation>R</variation>
    <location>
        <position position="124"/>
    </location>
</feature>
<feature type="mutagenesis site" description="Inhibits ARE-containing RNA-binding, deadenylation and RNA decapping activities." evidence="20 30 35">
    <original>F</original>
    <variation>N</variation>
    <location>
        <position position="126"/>
    </location>
</feature>
<feature type="mutagenesis site" description="Inhibits both ARE-binding and mRNA deadenylation activities." evidence="5">
    <original>C</original>
    <variation>R</variation>
    <location>
        <position position="147"/>
    </location>
</feature>
<feature type="mutagenesis site" description="Inhibits interaction with SH3KBP1." evidence="28">
    <original>P</original>
    <variation>V</variation>
    <location>
        <position position="309"/>
    </location>
</feature>
<feature type="mutagenesis site" description="Abolishes interaction with CNOT1." evidence="33">
    <original>R</original>
    <variation>A</variation>
    <location>
        <position position="315"/>
    </location>
</feature>
<feature type="mutagenesis site" description="Abolishes interaction with CNOT1 and impairs TNF mRNA deadenylation." evidence="33">
    <original>F</original>
    <variation>A</variation>
    <location>
        <position position="319"/>
    </location>
</feature>
<feature type="helix" evidence="47">
    <location>
        <begin position="317"/>
        <end position="322"/>
    </location>
</feature>
<reference key="1">
    <citation type="journal article" date="1991" name="Nucleic Acids Res.">
        <title>The human TTP protein: sequence, alignment with related proteins, and chromosomal localization of the mouse and human genes.</title>
        <authorList>
            <person name="Taylor G.A."/>
            <person name="Lai W.S."/>
            <person name="Oakey R.J."/>
            <person name="Seldin M.F."/>
            <person name="Shows T.B."/>
            <person name="Eddy R.L. Jr."/>
            <person name="Blackshear P.J."/>
        </authorList>
    </citation>
    <scope>NUCLEOTIDE SEQUENCE [GENOMIC DNA / MRNA]</scope>
</reference>
<reference key="2">
    <citation type="journal article" date="2004" name="Nat. Genet.">
        <title>Complete sequencing and characterization of 21,243 full-length human cDNAs.</title>
        <authorList>
            <person name="Ota T."/>
            <person name="Suzuki Y."/>
            <person name="Nishikawa T."/>
            <person name="Otsuki T."/>
            <person name="Sugiyama T."/>
            <person name="Irie R."/>
            <person name="Wakamatsu A."/>
            <person name="Hayashi K."/>
            <person name="Sato H."/>
            <person name="Nagai K."/>
            <person name="Kimura K."/>
            <person name="Makita H."/>
            <person name="Sekine M."/>
            <person name="Obayashi M."/>
            <person name="Nishi T."/>
            <person name="Shibahara T."/>
            <person name="Tanaka T."/>
            <person name="Ishii S."/>
            <person name="Yamamoto J."/>
            <person name="Saito K."/>
            <person name="Kawai Y."/>
            <person name="Isono Y."/>
            <person name="Nakamura Y."/>
            <person name="Nagahari K."/>
            <person name="Murakami K."/>
            <person name="Yasuda T."/>
            <person name="Iwayanagi T."/>
            <person name="Wagatsuma M."/>
            <person name="Shiratori A."/>
            <person name="Sudo H."/>
            <person name="Hosoiri T."/>
            <person name="Kaku Y."/>
            <person name="Kodaira H."/>
            <person name="Kondo H."/>
            <person name="Sugawara M."/>
            <person name="Takahashi M."/>
            <person name="Kanda K."/>
            <person name="Yokoi T."/>
            <person name="Furuya T."/>
            <person name="Kikkawa E."/>
            <person name="Omura Y."/>
            <person name="Abe K."/>
            <person name="Kamihara K."/>
            <person name="Katsuta N."/>
            <person name="Sato K."/>
            <person name="Tanikawa M."/>
            <person name="Yamazaki M."/>
            <person name="Ninomiya K."/>
            <person name="Ishibashi T."/>
            <person name="Yamashita H."/>
            <person name="Murakawa K."/>
            <person name="Fujimori K."/>
            <person name="Tanai H."/>
            <person name="Kimata M."/>
            <person name="Watanabe M."/>
            <person name="Hiraoka S."/>
            <person name="Chiba Y."/>
            <person name="Ishida S."/>
            <person name="Ono Y."/>
            <person name="Takiguchi S."/>
            <person name="Watanabe S."/>
            <person name="Yosida M."/>
            <person name="Hotuta T."/>
            <person name="Kusano J."/>
            <person name="Kanehori K."/>
            <person name="Takahashi-Fujii A."/>
            <person name="Hara H."/>
            <person name="Tanase T.-O."/>
            <person name="Nomura Y."/>
            <person name="Togiya S."/>
            <person name="Komai F."/>
            <person name="Hara R."/>
            <person name="Takeuchi K."/>
            <person name="Arita M."/>
            <person name="Imose N."/>
            <person name="Musashino K."/>
            <person name="Yuuki H."/>
            <person name="Oshima A."/>
            <person name="Sasaki N."/>
            <person name="Aotsuka S."/>
            <person name="Yoshikawa Y."/>
            <person name="Matsunawa H."/>
            <person name="Ichihara T."/>
            <person name="Shiohata N."/>
            <person name="Sano S."/>
            <person name="Moriya S."/>
            <person name="Momiyama H."/>
            <person name="Satoh N."/>
            <person name="Takami S."/>
            <person name="Terashima Y."/>
            <person name="Suzuki O."/>
            <person name="Nakagawa S."/>
            <person name="Senoh A."/>
            <person name="Mizoguchi H."/>
            <person name="Goto Y."/>
            <person name="Shimizu F."/>
            <person name="Wakebe H."/>
            <person name="Hishigaki H."/>
            <person name="Watanabe T."/>
            <person name="Sugiyama A."/>
            <person name="Takemoto M."/>
            <person name="Kawakami B."/>
            <person name="Yamazaki M."/>
            <person name="Watanabe K."/>
            <person name="Kumagai A."/>
            <person name="Itakura S."/>
            <person name="Fukuzumi Y."/>
            <person name="Fujimori Y."/>
            <person name="Komiyama M."/>
            <person name="Tashiro H."/>
            <person name="Tanigami A."/>
            <person name="Fujiwara T."/>
            <person name="Ono T."/>
            <person name="Yamada K."/>
            <person name="Fujii Y."/>
            <person name="Ozaki K."/>
            <person name="Hirao M."/>
            <person name="Ohmori Y."/>
            <person name="Kawabata A."/>
            <person name="Hikiji T."/>
            <person name="Kobatake N."/>
            <person name="Inagaki H."/>
            <person name="Ikema Y."/>
            <person name="Okamoto S."/>
            <person name="Okitani R."/>
            <person name="Kawakami T."/>
            <person name="Noguchi S."/>
            <person name="Itoh T."/>
            <person name="Shigeta K."/>
            <person name="Senba T."/>
            <person name="Matsumura K."/>
            <person name="Nakajima Y."/>
            <person name="Mizuno T."/>
            <person name="Morinaga M."/>
            <person name="Sasaki M."/>
            <person name="Togashi T."/>
            <person name="Oyama M."/>
            <person name="Hata H."/>
            <person name="Watanabe M."/>
            <person name="Komatsu T."/>
            <person name="Mizushima-Sugano J."/>
            <person name="Satoh T."/>
            <person name="Shirai Y."/>
            <person name="Takahashi Y."/>
            <person name="Nakagawa K."/>
            <person name="Okumura K."/>
            <person name="Nagase T."/>
            <person name="Nomura N."/>
            <person name="Kikuchi H."/>
            <person name="Masuho Y."/>
            <person name="Yamashita R."/>
            <person name="Nakai K."/>
            <person name="Yada T."/>
            <person name="Nakamura Y."/>
            <person name="Ohara O."/>
            <person name="Isogai T."/>
            <person name="Sugano S."/>
        </authorList>
    </citation>
    <scope>NUCLEOTIDE SEQUENCE [LARGE SCALE MRNA]</scope>
    <source>
        <tissue>Uterus</tissue>
    </source>
</reference>
<reference key="3">
    <citation type="submission" date="2004-10" db="EMBL/GenBank/DDBJ databases">
        <authorList>
            <consortium name="NIEHS SNPs program"/>
        </authorList>
    </citation>
    <scope>NUCLEOTIDE SEQUENCE [GENOMIC DNA]</scope>
    <scope>VARIANTS SER-37; PHE-259 AND PHE-324</scope>
</reference>
<reference key="4">
    <citation type="journal article" date="2004" name="Genome Res.">
        <title>The status, quality, and expansion of the NIH full-length cDNA project: the Mammalian Gene Collection (MGC).</title>
        <authorList>
            <consortium name="The MGC Project Team"/>
        </authorList>
    </citation>
    <scope>NUCLEOTIDE SEQUENCE [LARGE SCALE MRNA]</scope>
    <source>
        <tissue>Pancreas</tissue>
    </source>
</reference>
<reference key="5">
    <citation type="journal article" date="1998" name="Science">
        <title>Feedback inhibition of macrophage tumor necrosis factor-alpha production by tristetraprolin.</title>
        <authorList>
            <person name="Carballo E."/>
            <person name="Lai W.S."/>
            <person name="Blackshear P.J."/>
        </authorList>
    </citation>
    <scope>FUNCTION</scope>
    <scope>RNA-BINDING</scope>
</reference>
<reference key="6">
    <citation type="journal article" date="1999" name="Mol. Cell. Biol.">
        <title>Evidence that tristetraprolin binds to AU-rich elements and promotes the deadenylation and destabilization of tumor necrosis factor alpha mRNA.</title>
        <authorList>
            <person name="Lai W.S."/>
            <person name="Carballo E."/>
            <person name="Strum J.R."/>
            <person name="Kennington E.A."/>
            <person name="Phillips R.S."/>
            <person name="Blackshear P.J."/>
        </authorList>
    </citation>
    <scope>FUNCTION</scope>
    <scope>RNA-BINDING</scope>
    <scope>SUBCELLULAR LOCATION</scope>
    <scope>DOMAIN</scope>
    <scope>MUTAGENESIS OF CYS-124 AND CYS-147</scope>
</reference>
<reference key="7">
    <citation type="journal article" date="2000" name="J. Biol. Chem.">
        <title>Interactions of CCCH zinc finger proteins with mRNA. Binding of tristetraprolin-related zinc finger proteins to Au-rich elements and destabilization of mRNA.</title>
        <authorList>
            <person name="Lai W.S."/>
            <person name="Carballo E."/>
            <person name="Thorn J.M."/>
            <person name="Kennington E.A."/>
            <person name="Blackshear P.J."/>
        </authorList>
    </citation>
    <scope>FUNCTION</scope>
    <scope>RNA-BINDING</scope>
</reference>
<reference key="8">
    <citation type="journal article" date="2001" name="Cell">
        <title>AU binding proteins recruit the exosome to degrade ARE-containing mRNAs.</title>
        <authorList>
            <person name="Chen C.-Y."/>
            <person name="Gherzi R."/>
            <person name="Ong S.-E."/>
            <person name="Chan E.L."/>
            <person name="Raijmakers R."/>
            <person name="Pruijn G.J.M."/>
            <person name="Stoecklin G."/>
            <person name="Moroni C."/>
            <person name="Mann M."/>
            <person name="Karin M."/>
        </authorList>
    </citation>
    <scope>FUNCTION</scope>
    <scope>ASSOCIATION WITH THE RNA EXOSOME COMPLEX</scope>
</reference>
<reference key="9">
    <citation type="journal article" date="2001" name="J. Biol. Chem.">
        <title>Interactions of CCCH zinc finger proteins with mRNA: tristetraprolin-mediated AU-rich element-dependent mRNA degradation can occur in the absence of a poly(A) tail.</title>
        <authorList>
            <person name="Lai W.S."/>
            <person name="Blackshear P.J."/>
        </authorList>
    </citation>
    <scope>FUNCTION</scope>
</reference>
<reference key="10">
    <citation type="journal article" date="2002" name="Arthritis Rheum.">
        <title>Analysis of the function, expression, and subcellular distribution of human tristetraprolin.</title>
        <authorList>
            <person name="Brooks S.A."/>
            <person name="Connolly J.E."/>
            <person name="Diegel R.J."/>
            <person name="Fava R.A."/>
            <person name="Rigby W.F."/>
        </authorList>
    </citation>
    <scope>FUNCTION</scope>
    <scope>RNA-BINDING</scope>
    <scope>SUBCELLULAR LOCATION</scope>
</reference>
<reference key="11">
    <citation type="journal article" date="2003" name="J. Natl. Cancer Inst.">
        <title>Interaction of retroviral Tax oncoproteins with tristetraprolin and regulation of tumor necrosis factor-alpha expression.</title>
        <authorList>
            <person name="Twizere J.-C."/>
            <person name="Kruys V."/>
            <person name="Lefebvre L."/>
            <person name="Vanderplasschen A."/>
            <person name="Collete D."/>
            <person name="Debacq C."/>
            <person name="Lai W.S."/>
            <person name="Jauniaux J.-C."/>
            <person name="Bernstein L.R."/>
            <person name="Semmes J.O."/>
            <person name="Burny A."/>
            <person name="Blackshear P.J."/>
            <person name="Kettmann R."/>
            <person name="Willems L."/>
        </authorList>
    </citation>
    <scope>FUNCTION (MICROBIAL INFECTION)</scope>
    <scope>INTERACTION WITH HTLV-1 TAX (MICROBIAL INFECTION)</scope>
    <scope>SUBCELLULAR LOCATION (MICROBIAL INFECTION)</scope>
</reference>
<reference key="12">
    <citation type="journal article" date="2003" name="Mol. Cell. Biol.">
        <title>Tristetraprolin and its family members can promote the cell-free deadenylation of AU-rich element-containing mRNAs by poly(A) ribonuclease.</title>
        <authorList>
            <person name="Lai W.S."/>
            <person name="Kennington E.A."/>
            <person name="Blackshear P.J."/>
        </authorList>
    </citation>
    <scope>FUNCTION</scope>
    <scope>RNA-BINDING</scope>
    <scope>MUTAGENESIS OF CYS-124</scope>
</reference>
<reference key="13">
    <citation type="journal article" date="2004" name="Biochem. Biophys. Res. Commun.">
        <title>Direct association of tristetraprolin with the nucleoporin CAN/Nup214.</title>
        <authorList>
            <person name="Carman J.A."/>
            <person name="Nadler S.G."/>
        </authorList>
    </citation>
    <scope>INTERACTION WITH NUP214</scope>
    <scope>SUBCELLULAR LOCATION</scope>
    <scope>INDUCTION</scope>
</reference>
<reference key="14">
    <citation type="journal article" date="2004" name="EMBO J.">
        <title>MK2-induced tristetraprolin:14-3-3 complexes prevent stress granule association and ARE-mRNA decay.</title>
        <authorList>
            <person name="Stoecklin G."/>
            <person name="Stubbs T."/>
            <person name="Kedersha N."/>
            <person name="Wax S."/>
            <person name="Rigby W.F."/>
            <person name="Blackwell T.K."/>
            <person name="Anderson P."/>
        </authorList>
    </citation>
    <scope>SUBCELLULAR LOCATION</scope>
</reference>
<reference key="15">
    <citation type="journal article" date="2004" name="J. Immunol.">
        <title>The role of mRNA turnover in the regulation of tristetraprolin expression: evidence for an extracellular signal-regulated kinase-specific, AU-rich element-dependent, autoregulatory pathway.</title>
        <authorList>
            <person name="Brooks S.A."/>
            <person name="Connolly J.E."/>
            <person name="Rigby W.F."/>
        </authorList>
    </citation>
    <scope>FUNCTION</scope>
    <scope>RNA-BINDING</scope>
    <scope>INDUCTION</scope>
</reference>
<reference key="16">
    <citation type="journal article" date="2005" name="Cell">
        <title>Involvement of microRNA in AU-rich element-mediated mRNA instability.</title>
        <authorList>
            <person name="Jing Q."/>
            <person name="Huang S."/>
            <person name="Guth S."/>
            <person name="Zarubin T."/>
            <person name="Motoyama A."/>
            <person name="Chen J."/>
            <person name="Di Padova F."/>
            <person name="Lin S.C."/>
            <person name="Gram H."/>
            <person name="Han J."/>
        </authorList>
    </citation>
    <scope>FUNCTION</scope>
    <scope>INTERACTION WITH AGO2 AND AGO4</scope>
</reference>
<reference key="17">
    <citation type="journal article" date="2005" name="Genes Dev.">
        <title>Recruitment and activation of mRNA decay enzymes by two ARE-mediated decay activation domains in the proteins TTP and BRF-1.</title>
        <authorList>
            <person name="Lykke-Andersen J."/>
            <person name="Wagner E."/>
        </authorList>
    </citation>
    <scope>FUNCTION</scope>
    <scope>IDENTIFICATION IN A MRNA DECAY ACTIVATION COMPLEX</scope>
    <scope>INTERACTION WITH CNOT6; DCP1A; DCP2; EXOSC2 AND XRN1</scope>
</reference>
<reference key="18">
    <citation type="journal article" date="2005" name="J. Immunol.">
        <title>Tristetraprolin down-regulates IL-2 gene expression through AU-rich element-mediated mRNA decay.</title>
        <authorList>
            <person name="Ogilvie R.L."/>
            <person name="Abelson M."/>
            <person name="Hau H.H."/>
            <person name="Vlasova I."/>
            <person name="Blackshear P.J."/>
            <person name="Bohjanen P.R."/>
        </authorList>
    </citation>
    <scope>FUNCTION</scope>
    <scope>RNA-BINDING</scope>
    <scope>INDUCTION</scope>
</reference>
<reference key="19">
    <citation type="journal article" date="2005" name="Mol. Cell">
        <title>Multiple processing body factors and the ARE binding protein TTP activate mRNA decapping.</title>
        <authorList>
            <person name="Fenger-Groen M."/>
            <person name="Fillman C."/>
            <person name="Norrild B."/>
            <person name="Lykke-Andersen J."/>
        </authorList>
    </citation>
    <scope>FUNCTION</scope>
    <scope>INTERACTION WITH DCP2 AND EDC3</scope>
    <scope>MUTAGENESIS OF PHE-126</scope>
</reference>
<reference key="20">
    <citation type="journal article" date="2005" name="Nucleic Acids Res.">
        <title>Involvement of KSRP in the post-transcriptional regulation of human iNOS expression-complex interplay of KSRP with TTP and HuR.</title>
        <authorList>
            <person name="Linker K."/>
            <person name="Pautz A."/>
            <person name="Fechir M."/>
            <person name="Hubrich T."/>
            <person name="Greeve J."/>
            <person name="Kleinert H."/>
        </authorList>
    </citation>
    <scope>INTERACTION WITH KHSRP</scope>
</reference>
<reference key="21">
    <citation type="journal article" date="2006" name="Biochem. J.">
        <title>Identification of the anti-inflammatory protein tristetraprolin as a hyperphosphorylated protein by mass spectrometry and site-directed mutagenesis.</title>
        <authorList>
            <person name="Cao H."/>
            <person name="Deterding L.J."/>
            <person name="Venable J.D."/>
            <person name="Kennington E.A."/>
            <person name="Yates J.R. III"/>
            <person name="Tomer K.B."/>
            <person name="Blackshear P.J."/>
        </authorList>
    </citation>
    <scope>PHOSPHORYLATION AT SER-66; SER-88; THR-92; SER-169; SER-186; SER-197; SER-218; SER-228; SER-276 AND SER-296</scope>
</reference>
<reference key="22">
    <citation type="journal article" date="2006" name="Mol. Cell. Biol.">
        <title>Posttranslational regulation of tristetraprolin subcellular localization and protein stability by p38 mitogen-activated protein kinase and extracellular signal-regulated kinase pathways.</title>
        <authorList>
            <person name="Brook M."/>
            <person name="Tchen C.R."/>
            <person name="Santalucia T."/>
            <person name="McIlrath J."/>
            <person name="Arthur J.S."/>
            <person name="Saklatvala J."/>
            <person name="Clark A.R."/>
        </authorList>
    </citation>
    <scope>INDUCTION</scope>
</reference>
<reference key="23">
    <citation type="journal article" date="2006" name="Mol. Cell. Biol.">
        <title>Novel mRNA targets for tristetraprolin (TTP) identified by global analysis of stabilized transcripts in TTP-deficient fibroblasts.</title>
        <authorList>
            <person name="Lai W.S."/>
            <person name="Parker J.S."/>
            <person name="Grissom S.F."/>
            <person name="Stumpo D.J."/>
            <person name="Blackshear P.J."/>
        </authorList>
    </citation>
    <scope>FUNCTION</scope>
    <scope>RNA-BINDING</scope>
    <scope>MUTAGENESIS OF CYS-124</scope>
</reference>
<reference key="24">
    <citation type="journal article" date="2006" name="Oncogene">
        <title>Tristetraprolin regulates Cyclin D1 and c-Myc mRNA stability in response to rapamycin in an Akt-dependent manner via p38 MAPK signaling.</title>
        <authorList>
            <person name="Marderosian M."/>
            <person name="Sharma A."/>
            <person name="Funk A.P."/>
            <person name="Vartanian R."/>
            <person name="Masri J."/>
            <person name="Jo O.D."/>
            <person name="Gera J.F."/>
        </authorList>
    </citation>
    <scope>FUNCTION</scope>
    <scope>RNA-BINDING</scope>
    <scope>INTERACTION WITH 14-3-3 PROTEINS</scope>
    <scope>PHOSPHORYLATION</scope>
</reference>
<reference key="25">
    <citation type="journal article" date="2007" name="Genes Dev.">
        <title>TTP and BRF proteins nucleate processing body formation to silence mRNAs with AU-rich elements.</title>
        <authorList>
            <person name="Franks T.M."/>
            <person name="Lykke-Andersen J."/>
        </authorList>
    </citation>
    <scope>FUNCTION</scope>
    <scope>SUBCELLULAR LOCATION</scope>
    <scope>MUTAGENESIS OF CYS-124</scope>
</reference>
<reference key="26">
    <citation type="journal article" date="2008" name="Proc. Natl. Acad. Sci. U.S.A.">
        <title>A quantitative atlas of mitotic phosphorylation.</title>
        <authorList>
            <person name="Dephoure N."/>
            <person name="Zhou C."/>
            <person name="Villen J."/>
            <person name="Beausoleil S.A."/>
            <person name="Bakalarski C.E."/>
            <person name="Elledge S.J."/>
            <person name="Gygi S.P."/>
        </authorList>
    </citation>
    <scope>PHOSPHORYLATION [LARGE SCALE ANALYSIS] AT SER-186</scope>
    <scope>IDENTIFICATION BY MASS SPECTROMETRY [LARGE SCALE ANALYSIS]</scope>
    <source>
        <tissue>Cervix carcinoma</tissue>
    </source>
</reference>
<reference key="27">
    <citation type="journal article" date="2008" name="RNA">
        <title>Identification of TTP mRNA targets in human dendritic cells reveals TTP as a critical regulator of dendritic cell maturation.</title>
        <authorList>
            <person name="Emmons J."/>
            <person name="Townley-Tilson W.H."/>
            <person name="Deleault K.M."/>
            <person name="Skinner S.J."/>
            <person name="Gross R.H."/>
            <person name="Whitfield M.L."/>
            <person name="Brooks S.A."/>
        </authorList>
    </citation>
    <scope>FUNCTION</scope>
    <scope>TISSUE SPECIFICITY</scope>
</reference>
<reference key="28">
    <citation type="journal article" date="2009" name="Mol. Cell. Biol.">
        <title>Stimulation of polo-like kinase 3 mRNA decay by tristetraprolin.</title>
        <authorList>
            <person name="Horner T.J."/>
            <person name="Lai W.S."/>
            <person name="Stumpo D.J."/>
            <person name="Blackshear P.J."/>
        </authorList>
    </citation>
    <scope>RNA-BINDING</scope>
    <scope>MUTAGENESIS OF CYS-124</scope>
</reference>
<reference key="29">
    <citation type="journal article" date="2009" name="Mol. Cell. Proteomics">
        <title>Large-scale proteomics analysis of the human kinome.</title>
        <authorList>
            <person name="Oppermann F.S."/>
            <person name="Gnad F."/>
            <person name="Olsen J.V."/>
            <person name="Hornberger R."/>
            <person name="Greff Z."/>
            <person name="Keri G."/>
            <person name="Mann M."/>
            <person name="Daub H."/>
        </authorList>
    </citation>
    <scope>IDENTIFICATION BY MASS SPECTROMETRY [LARGE SCALE ANALYSIS]</scope>
</reference>
<reference key="30">
    <citation type="journal article" date="2010" name="Growth Factors">
        <title>ZFP36L1 is regulated by growth factors and cytokines in keratinocytes and influences their VEGF production.</title>
        <authorList>
            <person name="Hacker C."/>
            <person name="Valchanova R."/>
            <person name="Adams S."/>
            <person name="Munz B."/>
        </authorList>
    </citation>
    <scope>INDUCTION</scope>
</reference>
<reference key="31">
    <citation type="journal article" date="2010" name="Mol. Biol. Cell">
        <title>ZFP36L1 negatively regulates erythroid differentiation of CD34+ hematopoietic stem cells by interfering with the Stat5b pathway.</title>
        <authorList>
            <person name="Vignudelli T."/>
            <person name="Selmi T."/>
            <person name="Martello A."/>
            <person name="Parenti S."/>
            <person name="Grande A."/>
            <person name="Gemelli C."/>
            <person name="Zanocco-Marani T."/>
            <person name="Ferrari S."/>
        </authorList>
    </citation>
    <scope>FUNCTION</scope>
    <scope>RNA-BINDING</scope>
</reference>
<reference key="32">
    <citation type="journal article" date="2010" name="PLoS ONE">
        <title>Phosphorylation of human tristetraprolin in response to its interaction with the Cbl interacting protein CIN85.</title>
        <authorList>
            <person name="Kedar V.P."/>
            <person name="Darby M.K."/>
            <person name="Williams J.G."/>
            <person name="Blackshear P.J."/>
        </authorList>
    </citation>
    <scope>FUNCTION</scope>
    <scope>INTERACTION WITH HEAT SHOCK 70 KDA PROTEINS; MAP3K4; NCL; PABPC1 AND SH3KBP1</scope>
    <scope>PHOSPHORYLATION AT SER-66 AND SER-93</scope>
    <scope>RNA-BINDING</scope>
    <scope>SUBCELLULAR LOCATION</scope>
    <scope>MUTAGENESIS OF PRO-309</scope>
</reference>
<reference key="33">
    <citation type="journal article" date="2011" name="Mol. Biol. Cell">
        <title>Hypoxia-inducible factor-1alpha mRNA: a new target for destabilization by tristetraprolin in endothelial cells.</title>
        <authorList>
            <person name="Chamboredon S."/>
            <person name="Ciais D."/>
            <person name="Desroches-Castan A."/>
            <person name="Savi P."/>
            <person name="Bono F."/>
            <person name="Feige J.J."/>
            <person name="Cherradi N."/>
        </authorList>
    </citation>
    <scope>FUNCTION</scope>
    <scope>RNA-BINDING</scope>
</reference>
<reference key="34">
    <citation type="journal article" date="2011" name="Mol. Cell. Biol.">
        <title>Phosphorylation of tristetraprolin by MK2 impairs AU-rich element mRNA decay by preventing deadenylase recruitment.</title>
        <authorList>
            <person name="Clement S.L."/>
            <person name="Scheckel C."/>
            <person name="Stoecklin G."/>
            <person name="Lykke-Andersen J."/>
        </authorList>
    </citation>
    <scope>MUTAGENESIS OF PHE-126</scope>
</reference>
<reference key="35">
    <citation type="journal article" date="2011" name="Sci. Signal.">
        <title>System-wide temporal characterization of the proteome and phosphoproteome of human embryonic stem cell differentiation.</title>
        <authorList>
            <person name="Rigbolt K.T."/>
            <person name="Prokhorova T.A."/>
            <person name="Akimov V."/>
            <person name="Henningsen J."/>
            <person name="Johansen P.T."/>
            <person name="Kratchmarova I."/>
            <person name="Kassem M."/>
            <person name="Mann M."/>
            <person name="Olsen J.V."/>
            <person name="Blagoev B."/>
        </authorList>
    </citation>
    <scope>IDENTIFICATION BY MASS SPECTROMETRY [LARGE SCALE ANALYSIS]</scope>
</reference>
<reference key="36">
    <citation type="journal article" date="2012" name="Cell. Signal.">
        <title>Protor-2 interacts with tristetraprolin to regulate mRNA stability during stress.</title>
        <authorList>
            <person name="Holmes B."/>
            <person name="Artinian N."/>
            <person name="Anderson L."/>
            <person name="Martin J."/>
            <person name="Masri J."/>
            <person name="Cloninger C."/>
            <person name="Bernath A."/>
            <person name="Bashir T."/>
            <person name="Benavides-Serrato A."/>
            <person name="Gera J."/>
        </authorList>
    </citation>
    <scope>INTERACTION WITH PRR5L</scope>
</reference>
<reference key="37">
    <citation type="journal article" date="2013" name="J. Proteome Res.">
        <title>Toward a comprehensive characterization of a human cancer cell phosphoproteome.</title>
        <authorList>
            <person name="Zhou H."/>
            <person name="Di Palma S."/>
            <person name="Preisinger C."/>
            <person name="Peng M."/>
            <person name="Polat A.N."/>
            <person name="Heck A.J."/>
            <person name="Mohammed S."/>
        </authorList>
    </citation>
    <scope>PHOSPHORYLATION [LARGE SCALE ANALYSIS] AT SER-93; SER-186 AND SER-323</scope>
    <scope>IDENTIFICATION BY MASS SPECTROMETRY [LARGE SCALE ANALYSIS]</scope>
    <source>
        <tissue>Cervix carcinoma</tissue>
        <tissue>Erythroleukemia</tissue>
    </source>
</reference>
<reference key="38">
    <citation type="journal article" date="2014" name="J. Proteomics">
        <title>An enzyme assisted RP-RPLC approach for in-depth analysis of human liver phosphoproteome.</title>
        <authorList>
            <person name="Bian Y."/>
            <person name="Song C."/>
            <person name="Cheng K."/>
            <person name="Dong M."/>
            <person name="Wang F."/>
            <person name="Huang J."/>
            <person name="Sun D."/>
            <person name="Wang L."/>
            <person name="Ye M."/>
            <person name="Zou H."/>
        </authorList>
    </citation>
    <scope>IDENTIFICATION BY MASS SPECTROMETRY [LARGE SCALE ANALYSIS]</scope>
    <source>
        <tissue>Liver</tissue>
    </source>
</reference>
<reference key="39">
    <citation type="journal article" date="2014" name="Nucleic Acids Res.">
        <title>ZFP36L1 and ZFP36L2 control LDLR mRNA stability via the ERK-RSK pathway.</title>
        <authorList>
            <person name="Adachi S."/>
            <person name="Homoto M."/>
            <person name="Tanaka R."/>
            <person name="Hioki Y."/>
            <person name="Murakami H."/>
            <person name="Suga H."/>
            <person name="Matsumoto M."/>
            <person name="Nakayama K.I."/>
            <person name="Hatta T."/>
            <person name="Iemura S."/>
            <person name="Natsume T."/>
        </authorList>
    </citation>
    <scope>INTERACTION WITH CNOT7</scope>
</reference>
<reference key="40">
    <citation type="journal article" date="2015" name="Elife">
        <title>Post-transcriptional regulation of satellite cell quiescence by TTP-mediated mRNA decay.</title>
        <authorList>
            <person name="Hausburg M.A."/>
            <person name="Doles J.D."/>
            <person name="Clement S.L."/>
            <person name="Cadwallader A.B."/>
            <person name="Hall M.N."/>
            <person name="Blackshear P.J."/>
            <person name="Lykke-Andersen J."/>
            <person name="Olwin B.B."/>
        </authorList>
    </citation>
    <scope>FUNCTION</scope>
    <scope>RNA-BINDING</scope>
    <scope>MUTAGENESIS OF PHE-126</scope>
</reference>
<reference key="41">
    <citation type="journal article" date="2016" name="Amino Acids">
        <title>Destabilization of the ornithine decarboxylase mRNA transcript by the RNA-binding protein tristetraprolin.</title>
        <authorList>
            <person name="Nowotarski S.L."/>
            <person name="Origanti S."/>
            <person name="Sass-Kuhn S."/>
            <person name="Shantz L.M."/>
        </authorList>
    </citation>
    <scope>FUNCTION</scope>
</reference>
<reference key="42">
    <citation type="journal article" date="2016" name="Eur. J. Cell Biol.">
        <title>Functional analysis of ZFP36 proteins in keratinocytes.</title>
        <authorList>
            <person name="Prenzler F."/>
            <person name="Fragasso A."/>
            <person name="Schmitt A."/>
            <person name="Munz B."/>
        </authorList>
    </citation>
    <scope>FUNCTION</scope>
    <scope>SUBCELLULAR LOCATION</scope>
    <scope>TISSUE SPECIFICITY</scope>
    <scope>INDUCTION</scope>
</reference>
<reference key="43">
    <citation type="journal article" date="2016" name="Sci. Rep.">
        <title>Interaction with pyruvate kinase M2 destabilizes tristetraprolin by proteasome degradation and regulates cell proliferation in breast cancer.</title>
        <authorList>
            <person name="Huang L."/>
            <person name="Yu Z."/>
            <person name="Zhang Z."/>
            <person name="Ma W."/>
            <person name="Song S."/>
            <person name="Huang G."/>
        </authorList>
    </citation>
    <scope>FUNCTION</scope>
    <scope>INTERACTION WITH PKM</scope>
    <scope>PHOSPHORYLATION</scope>
    <scope>UBIQUITINATION</scope>
    <scope>MUTAGENESIS OF SER-60</scope>
</reference>
<reference key="44">
    <citation type="journal article" date="2019" name="Genes Dev.">
        <title>Molecular basis for GIGYF-Me31B complex assembly in 4EHP-mediated translational repression.</title>
        <authorList>
            <person name="Peter D."/>
            <person name="Ruscica V."/>
            <person name="Bawankar P."/>
            <person name="Weber R."/>
            <person name="Helms S."/>
            <person name="Valkov E."/>
            <person name="Igreja C."/>
            <person name="Izaurralde E."/>
        </authorList>
    </citation>
    <scope>FUNCTION</scope>
</reference>
<reference key="45">
    <citation type="journal article" date="2013" name="Nat. Struct. Mol. Biol.">
        <title>Structural basis for the recruitment of the human CCR4-NOT deadenylase complex by tristetraprolin.</title>
        <authorList>
            <person name="Fabian M.R."/>
            <person name="Frank F."/>
            <person name="Rouya C."/>
            <person name="Siddiqui N."/>
            <person name="Lai W.S."/>
            <person name="Karetnikov A."/>
            <person name="Blackshear P.J."/>
            <person name="Nagar B."/>
            <person name="Sonenberg N."/>
        </authorList>
    </citation>
    <scope>X-RAY CRYSTALLOGRAPHY (1.55 ANGSTROMS) OF 312-326 IN COMPLEX WITH CNOT1</scope>
    <scope>INTERACTION WITH CNOT1</scope>
    <scope>FUNCTION</scope>
    <scope>MUTAGENESIS OF ARG-315 AND PHE-319</scope>
</reference>
<name>TTP_HUMAN</name>
<comment type="function">
    <text evidence="1 5 6 7 8 9 10 14 15 16 17 20 22 23 24 25 26 28 29 31 33 35 36 37 38 39 40">Zinc-finger RNA-binding protein that destabilizes several cytoplasmic AU-rich element (ARE)-containing mRNA transcripts by promoting their poly(A) tail removal or deadenylation, and hence provide a mechanism for attenuating protein synthesis (PubMed:10330172, PubMed:10751406, PubMed:11279239, PubMed:12115244, PubMed:12748283, PubMed:15187101, PubMed:15634918, PubMed:16702957, PubMed:17030620, PubMed:20221403, PubMed:20702587, PubMed:21775632, PubMed:23644599, PubMed:25815583, PubMed:27193233, PubMed:31439631, PubMed:9703499). Acts as an 3'-untranslated region (UTR) ARE mRNA-binding adapter protein to communicate signaling events to the mRNA decay machinery (PubMed:15687258, PubMed:23644599). Recruits deadenylase CNOT7 (and probably the CCR4-NOT complex) via association with CNOT1, and hence promotes ARE-mediated mRNA deadenylation (PubMed:23644599). Functions also by recruiting components of the cytoplasmic RNA decay machinery to the bound ARE-containing mRNAs (PubMed:11719186, PubMed:12748283, PubMed:15687258, PubMed:16364915). Self regulates by destabilizing its own mRNA (PubMed:15187101). Binds to 3'-UTR ARE of numerous mRNAs and of its own mRNA (PubMed:10330172, PubMed:10751406, PubMed:12115244, PubMed:15187101, PubMed:15634918, PubMed:16702957, PubMed:17030620, PubMed:19188452, PubMed:20221403, PubMed:20702587, PubMed:21775632, PubMed:25815583). Plays a role in anti-inflammatory responses; suppresses tumor necrosis factor (TNF)-alpha production by stimulating ARE-mediated TNF-alpha mRNA decay and several other inflammatory ARE-containing mRNAs in interferon (IFN)- and/or lipopolysaccharide (LPS)-induced macrophages (By similarity). Also plays a role in the regulation of dendritic cell maturation at the post-transcriptional level, and hence operates as part of a negative feedback loop to limit the inflammatory response (PubMed:18367721). Promotes ARE-mediated mRNA decay of hypoxia-inducible factor HIF1A mRNA during the response of endothelial cells to hypoxia (PubMed:21775632). Positively regulates early adipogenesis of preadipocytes by promoting ARE-mediated mRNA decay of immediate early genes (IEGs) (By similarity). Negatively regulates hematopoietic/erythroid cell differentiation by promoting ARE-mediated mRNA decay of the transcription factor STAT5B mRNA (PubMed:20702587). Plays a role in maintaining skeletal muscle satellite cell quiescence by promoting ARE-mediated mRNA decay of the myogenic determination factor MYOD1 mRNA (By similarity). Associates also with and regulates the expression of non-ARE-containing target mRNAs at the post-transcriptional level, such as MHC class I mRNAs (PubMed:18367721). Participates in association with argonaute RISC catalytic components in the ARE-mediated mRNA decay mechanism; assists microRNA (miRNA) targeting ARE-containing mRNAs (PubMed:15766526). May also play a role in the regulation of cytoplasmic mRNA decapping; enhances decapping of ARE-containing RNAs, in vitro (PubMed:16364915). Involved in the delivery of target ARE-mRNAs to processing bodies (PBs) (PubMed:17369404). In addition to its cytosolic mRNA-decay function, affects nuclear pre-mRNA processing (By similarity). Negatively regulates nuclear poly(A)-binding protein PABPN1-stimulated polyadenylation activity on ARE-containing pre-mRNA during LPS-stimulated macrophages (By similarity). Also involved in the regulation of stress granule (SG) and P-body (PB) formation and fusion (By similarity). Plays a role in the regulation of keratinocyte proliferation, differentiation and apoptosis (PubMed:27182009). Plays a role as a tumor suppressor by inhibiting cell proliferation in breast cancer cells (PubMed:26926077).</text>
</comment>
<comment type="function">
    <text evidence="11">(Microbial infection) Negatively regulates HTLV-1 TAX-dependent transactivation of viral long terminal repeat (LTR) promoter.</text>
</comment>
<comment type="subunit">
    <text evidence="1 8 12 16 17 18 20 22 28 32 33 34 36">Associates with cytoplasmic CCR4-NOT and PAN2-PAN3 deadenylase complexes to trigger ARE-containing mRNA deadenylation and decay processes (By similarity). Part of a mRNA decay activation complex at least composed of poly(A)-specific exoribonucleases CNOT6, EXOSC2 and XRN1 and mRNA-decapping enzymes DCP1A and DCP2 (PubMed:15687258). Associates with the RNA exosome complex (PubMed:11719186). Interacts (via phosphorylated form) with 14-3-3 proteins; these interactions promote exclusion of ZFP36 from cytoplasmic stress granules in response to arsenite treatment in a MAPKAPK2-dependent manner and does not prevent CCR4-NOT deadenylase complex recruitment or ZFP36-induced ARE-containing mRNA deadenylation and decay processes (By similarity). Interacts with 14-3-3 proteins; these interactions occur in response to rapamycin in an Akt-dependent manner (PubMed:16702957). Interacts with AGO2 and AGO4 (PubMed:15766526). Interacts (via C-terminus) with CNOT1; this interaction occurs in a RNA-independent manner and induces mRNA deadenylation (PubMed:23644599). Interacts (via N-terminus) with CNOT6 (PubMed:15687258). Interacts with CNOT6L (By similarity). Interacts (via C-terminus) with CNOT7; this interaction occurs in a RNA-independent manner, induces mRNA deadenylation and is inhibited in a phosphorylation MAPKAPK2-dependent manner (PubMed:25106868). Interacts (via unphosphorylated form) with CNOT8; this interaction occurs in a RNA-independent manner and is inhibited in a phosphorylation MAPKAPK2-dependent manner (By similarity). Interacts with DCP1A (PubMed:15687258). Interacts (via N-terminus) with DCP2 (PubMed:15687258, PubMed:16364915). Interacts with EDC3 (PubMed:16364915). Interacts (via N-terminus) with EXOSC2 (PubMed:15687258). Interacts with heat shock 70 kDa proteins (PubMed:20221403). Interacts with KHSRP; this interaction increases upon cytokine-induced treatment (PubMed:16126846). Interacts with MAP3K4; this interaction enhances the association with SH3KBP1/CIN85 (PubMed:20221403). Interacts with MAPKAPK2; this interaction occurs upon skeletal muscle satellite cell activation (By similarity). Interacts with NCL (PubMed:20221403). Interacts with NUP214; this interaction increases upon lipopolysaccharide (LPS) stimulation (PubMed:14766228). Interacts with PABPC1; this interaction occurs in a RNA-dependent manner (PubMed:20221403). Interacts (via hypophosphorylated form) with PABPN1 (via RRM domain and C-terminal arginine-rich region); this interaction occurs in the nucleus in a RNA-independent manner, decreases in presence of single-stranded poly(A) RNA-oligomer and in a p38 MAPK-dependent-manner and inhibits nuclear poly(A) tail synthesis (By similarity). Interacts with PAN2 (By similarity). Interacts (via C3H1-type zinc finger domains) with PKM (PubMed:26926077). Interacts (via C3H1-type zinc finger domains) with nuclear RNA poly(A) polymerase (By similarity). Interacts with PPP2CA; this interaction occurs in LPS-stimulated cells and induces ZFP36 dephosphorylation, and hence may promote ARE-containing mRNAs decay (By similarity). Interacts (via C-terminus) with PRR5L (via C-terminus); this interaction may accelerate ZFP36-mediated mRNA decay during stress (PubMed:21964062). Interacts (via C-terminus) with SFN; this interaction occurs in a phosphorylation-dependent manner (By similarity). Interacts (via extreme C-terminal region) with SH3KBP1/CIN85 (via SH3 domains); this interaction enhances MAP3K4-induced phosphorylation of ZFP36 at Ser-66 and Ser-93 and does not alter neither ZFP36 binding to ARE-containing transcripts nor TNF-alpha mRNA decay (PubMed:20221403). Interacts with XRN1 (PubMed:15687258). Interacts (via C-terminus and Ser-186 phosphorylated form) with YWHAB; this interaction occurs in a p38/MAPKAPK2-dependent manner, increases cytoplasmic localization of ZFP36 and protects ZFP36 from Ser-186 dephosphorylation by serine/threonine phosphatase 2A, and hence may be crucial for stabilizing ARE-containing mRNAs (By similarity). Interacts (via phosphorylated form) with YWHAE (By similarity). Interacts (via C-terminus) with YWHAG; this interaction occurs in a phosphorylation-dependent manner (By similarity). Interacts with YWHAH; this interaction occurs in a phosphorylation-dependent manner (By similarity). Interacts with YWHAQ; this interaction occurs in a phosphorylation-dependent manner (By similarity). Interacts with (via C-terminus) YWHAZ; this interaction occurs in a phosphorylation-dependent manner (By similarity). Interacts (via P-P-P-P-G repeats) with GIGYF2; the interaction is direct (By similarity).</text>
</comment>
<comment type="subunit">
    <text evidence="11">(Microbial infection) Interacts (via C-terminus) with HTLV-1 TAX (via C-terminus); this interaction inhibits HTLV-1 TAX to transactivate viral long terminal repeat (LTR) promoter (PubMed:14679154).</text>
</comment>
<comment type="interaction">
    <interactant intactId="EBI-374248">
        <id>P26651</id>
    </interactant>
    <interactant intactId="EBI-16057352">
        <id>A5YKK6-2</id>
        <label>CNOT1</label>
    </interactant>
    <organismsDiffer>false</organismsDiffer>
    <experiments>4</experiments>
</comment>
<comment type="interaction">
    <interactant intactId="EBI-374248">
        <id>P26651</id>
    </interactant>
    <interactant intactId="EBI-374238">
        <id>Q9NPI6</id>
        <label>DCP1A</label>
    </interactant>
    <organismsDiffer>false</organismsDiffer>
    <experiments>2</experiments>
</comment>
<comment type="interaction">
    <interactant intactId="EBI-374248">
        <id>P26651</id>
    </interactant>
    <interactant intactId="EBI-997311">
        <id>Q96F86</id>
        <label>EDC3</label>
    </interactant>
    <organismsDiffer>false</organismsDiffer>
    <experiments>2</experiments>
</comment>
<comment type="interaction">
    <interactant intactId="EBI-374248">
        <id>P26651</id>
    </interactant>
    <interactant intactId="EBI-741101">
        <id>Q13643</id>
        <label>FHL3</label>
    </interactant>
    <organismsDiffer>false</organismsDiffer>
    <experiments>4</experiments>
</comment>
<comment type="interaction">
    <interactant intactId="EBI-374248">
        <id>P26651</id>
    </interactant>
    <interactant intactId="EBI-1055254">
        <id>Q8WXH2</id>
        <label>JPH3</label>
    </interactant>
    <organismsDiffer>false</organismsDiffer>
    <experiments>3</experiments>
</comment>
<comment type="interaction">
    <interactant intactId="EBI-374248">
        <id>P26651</id>
    </interactant>
    <interactant intactId="EBI-716404">
        <id>P16284</id>
        <label>PECAM1</label>
    </interactant>
    <organismsDiffer>false</organismsDiffer>
    <experiments>3</experiments>
</comment>
<comment type="interaction">
    <interactant intactId="EBI-374248">
        <id>P26651</id>
    </interactant>
    <interactant intactId="EBI-11984663">
        <id>Q06455-2</id>
        <label>RUNX1T1</label>
    </interactant>
    <organismsDiffer>false</organismsDiffer>
    <experiments>3</experiments>
</comment>
<comment type="interaction">
    <interactant intactId="EBI-374248">
        <id>P26651</id>
    </interactant>
    <interactant intactId="EBI-353844">
        <id>P08670</id>
        <label>VIM</label>
    </interactant>
    <organismsDiffer>false</organismsDiffer>
    <experiments>3</experiments>
</comment>
<comment type="subcellular location">
    <subcellularLocation>
        <location evidence="13 37">Nucleus</location>
    </subcellularLocation>
    <subcellularLocation>
        <location evidence="5 9 12 13 28">Cytoplasm</location>
    </subcellularLocation>
    <subcellularLocation>
        <location evidence="13">Cytoplasmic granule</location>
    </subcellularLocation>
    <subcellularLocation>
        <location evidence="24">Cytoplasm</location>
        <location evidence="24">P-body</location>
    </subcellularLocation>
    <text evidence="1 13 24 28">Shuttles between nucleus and cytoplasm in a CRM1-dependent manner (By similarity). Localized predominantly in the cytoplasm in a p38 MAPK- and YWHAB-dependent manner (By similarity). Colocalizes with SH3KBP1 and MAP3K4 in the cytoplasm (PubMed:20221403). Component of cytoplasmic stress granules (SGs) (By similarity). Localizes to cytoplasmic stress granules upon energy starvation (PubMed:15014438). Localizes in processing bodies (PBs) (PubMed:17369404). Excluded from stress granules in a phosphorylation MAPKAPK2-dependent manner (By similarity). Shuttles in and out of both cytoplasmic P-body and SGs (By similarity).</text>
</comment>
<comment type="subcellular location">
    <subcellularLocation>
        <location evidence="11">Nucleus</location>
    </subcellularLocation>
    <subcellularLocation>
        <location evidence="11">Cytoplasm</location>
    </subcellularLocation>
    <text evidence="11">(Microbial infection) Colocalizes with HTLV-1 TAX in the nucleus and the cytoplasm in a region surrounding the nucleus.</text>
</comment>
<comment type="tissue specificity">
    <text evidence="25 37">Expressed in both basal and suprabasal epidermal layers (PubMed:27182009). Expressed in epidermal keratinocytes (PubMed:27182009). Expressed strongly in mature dendritic cells (PubMed:18367721). Expressed in immature dendritic cells (at protein level) (PubMed:18367721).</text>
</comment>
<comment type="induction">
    <text evidence="12 14 15 21 27 37">Up-regulated by T cell activation (PubMed:15634918). Up-regulated in keratinocytes in response to wounding (PubMed:27182009). Up-regulated by lipopolysaccharide (LPS) in a p38 MAPK- and ERK-dependent manner (at protein level) (PubMed:15187101, PubMed:16508015). Up-regulated strongly during epidermal repair after wounding in keratinocytes (PubMed:20166898). Up-regulated strongly by epidermal growth factor (EGF) and tumor necrosis factor (TNF-alpha) in keratinocytes (PubMed:20166898). Up-regulated moderately by granulocyte macrophage colony-stimulating factor (GM-CSF) and fibroblast growth factor (FGF1) in keratinocytes (PubMed:20166898). Up-regulated also by glucocorticoid dexamethasone in keratinocytes (PubMed:20166898). Up-regulated by LPS in a p38 MAPK-dependent manner (PubMed:14766228, PubMed:15187101).</text>
</comment>
<comment type="domain">
    <text evidence="5">The C3H1-type zinc finger domains are necessary for ARE-binding activity (PubMed:10330172).</text>
</comment>
<comment type="PTM">
    <text evidence="1 22 28 36">Phosphorylated. Phosphorylation at serine and/or threonine residues occurs in a p38 MAPK- and MAPKAPK2-dependent manner (PubMed:16702957). Phosphorylated by MAPKAPK2 at Ser-60 and Ser-186; phosphorylation increases its stability and cytoplasmic localization, promotes binding to 14-3-3 adapter proteins and inhibits the recruitment of cytoplasmic CCR4-NOT and PAN2-PAN3 deadenylase complexes to the mRNA decay machinery, thereby inhibiting ZFP36-induced ARE-containing mRNA deadenylation and decay processes. Phosphorylation by MAPKAPK2 does not impair ARE-containing RNA-binding. Phosphorylated in a MAPKAPK2- and p38 MAPK-dependent manner upon skeletal muscle satellite cell activation; this phosphorylation inhibits ZFP36-mediated mRNA decay activity, and hence stabilizes MYOD1 mRNA (By similarity). Phosphorylated by MAPK1 upon mitogen stimulation (By similarity). Phosphorylated at Ser-66 and Ser-93; these phosphorylations increase in a SH3KBP1-dependent manner (PubMed:20221403). Phosphorylated at serine and threonine residues in a pyruvate kinase PKM- and p38 MAPK-dependent manner (PubMed:26926077). Phosphorylation at Ser-60 may participate in the PKM-mediated degradation of ZFP36 in a p38 MAPK-dependent manner (PubMed:26926077). Dephosphorylated by serine/threonine phosphatase 2A at Ser-186 (By similarity).</text>
</comment>
<comment type="PTM">
    <text evidence="36">Ubiquitinated; pyruvate kinase (PKM)-dependent ubiquitination leads to proteasomal degradation through a p38 MAPK signaling pathway (PubMed:26926077).</text>
</comment>
<organism>
    <name type="scientific">Homo sapiens</name>
    <name type="common">Human</name>
    <dbReference type="NCBI Taxonomy" id="9606"/>
    <lineage>
        <taxon>Eukaryota</taxon>
        <taxon>Metazoa</taxon>
        <taxon>Chordata</taxon>
        <taxon>Craniata</taxon>
        <taxon>Vertebrata</taxon>
        <taxon>Euteleostomi</taxon>
        <taxon>Mammalia</taxon>
        <taxon>Eutheria</taxon>
        <taxon>Euarchontoglires</taxon>
        <taxon>Primates</taxon>
        <taxon>Haplorrhini</taxon>
        <taxon>Catarrhini</taxon>
        <taxon>Hominidae</taxon>
        <taxon>Homo</taxon>
    </lineage>
</organism>
<protein>
    <recommendedName>
        <fullName evidence="43">mRNA decay activator protein ZFP36</fullName>
    </recommendedName>
    <alternativeName>
        <fullName>G0/G1 switch regulatory protein 24</fullName>
    </alternativeName>
    <alternativeName>
        <fullName evidence="43">Growth factor-inducible nuclear protein NUP475</fullName>
    </alternativeName>
    <alternativeName>
        <fullName evidence="42">Tristetraprolin</fullName>
    </alternativeName>
    <alternativeName>
        <fullName evidence="44">Zinc finger protein 36</fullName>
        <shortName evidence="1">Zfp-36</shortName>
    </alternativeName>
</protein>
<sequence>MDLTAIYESLLSLSPDVPVPSDHGGTESSPGWGSSGPWSLSPSDSSPSGVTSRLPGRSTSLVEGRSCGWVPPPPGFAPLAPRLGPELSPSPTSPTATSTTPSRYKTELCRTFSESGRCRYGAKCQFAHGLGELRQANRHPKYKTELCHKFYLQGRCPYGSRCHFIHNPSEDLAAPGHPPVLRQSISFSGLPSGRRTSPPPPGLAGPSLSSSSFSPSSSPPPPGDLPLSPSAFSAAPGTPLARRDPTPVCCPSCRRATPISVWGPLGGLVRTPSVQSLGSDPDEYASSGSSLGGSDSPVFEAGVFAPPQPVAAPRRLPIFNRISVSE</sequence>
<evidence type="ECO:0000250" key="1">
    <source>
        <dbReference type="UniProtKB" id="P22893"/>
    </source>
</evidence>
<evidence type="ECO:0000250" key="2">
    <source>
        <dbReference type="UniProtKB" id="P47973"/>
    </source>
</evidence>
<evidence type="ECO:0000255" key="3">
    <source>
        <dbReference type="PROSITE-ProRule" id="PRU00723"/>
    </source>
</evidence>
<evidence type="ECO:0000256" key="4">
    <source>
        <dbReference type="SAM" id="MobiDB-lite"/>
    </source>
</evidence>
<evidence type="ECO:0000269" key="5">
    <source>
    </source>
</evidence>
<evidence type="ECO:0000269" key="6">
    <source>
    </source>
</evidence>
<evidence type="ECO:0000269" key="7">
    <source>
    </source>
</evidence>
<evidence type="ECO:0000269" key="8">
    <source>
    </source>
</evidence>
<evidence type="ECO:0000269" key="9">
    <source>
    </source>
</evidence>
<evidence type="ECO:0000269" key="10">
    <source>
    </source>
</evidence>
<evidence type="ECO:0000269" key="11">
    <source>
    </source>
</evidence>
<evidence type="ECO:0000269" key="12">
    <source>
    </source>
</evidence>
<evidence type="ECO:0000269" key="13">
    <source>
    </source>
</evidence>
<evidence type="ECO:0000269" key="14">
    <source>
    </source>
</evidence>
<evidence type="ECO:0000269" key="15">
    <source>
    </source>
</evidence>
<evidence type="ECO:0000269" key="16">
    <source>
    </source>
</evidence>
<evidence type="ECO:0000269" key="17">
    <source>
    </source>
</evidence>
<evidence type="ECO:0000269" key="18">
    <source>
    </source>
</evidence>
<evidence type="ECO:0000269" key="19">
    <source>
    </source>
</evidence>
<evidence type="ECO:0000269" key="20">
    <source>
    </source>
</evidence>
<evidence type="ECO:0000269" key="21">
    <source>
    </source>
</evidence>
<evidence type="ECO:0000269" key="22">
    <source>
    </source>
</evidence>
<evidence type="ECO:0000269" key="23">
    <source>
    </source>
</evidence>
<evidence type="ECO:0000269" key="24">
    <source>
    </source>
</evidence>
<evidence type="ECO:0000269" key="25">
    <source>
    </source>
</evidence>
<evidence type="ECO:0000269" key="26">
    <source>
    </source>
</evidence>
<evidence type="ECO:0000269" key="27">
    <source>
    </source>
</evidence>
<evidence type="ECO:0000269" key="28">
    <source>
    </source>
</evidence>
<evidence type="ECO:0000269" key="29">
    <source>
    </source>
</evidence>
<evidence type="ECO:0000269" key="30">
    <source>
    </source>
</evidence>
<evidence type="ECO:0000269" key="31">
    <source>
    </source>
</evidence>
<evidence type="ECO:0000269" key="32">
    <source>
    </source>
</evidence>
<evidence type="ECO:0000269" key="33">
    <source>
    </source>
</evidence>
<evidence type="ECO:0000269" key="34">
    <source>
    </source>
</evidence>
<evidence type="ECO:0000269" key="35">
    <source>
    </source>
</evidence>
<evidence type="ECO:0000269" key="36">
    <source>
    </source>
</evidence>
<evidence type="ECO:0000269" key="37">
    <source>
    </source>
</evidence>
<evidence type="ECO:0000269" key="38">
    <source>
    </source>
</evidence>
<evidence type="ECO:0000269" key="39">
    <source>
    </source>
</evidence>
<evidence type="ECO:0000269" key="40">
    <source>
    </source>
</evidence>
<evidence type="ECO:0000269" key="41">
    <source ref="3"/>
</evidence>
<evidence type="ECO:0000303" key="42">
    <source>
    </source>
</evidence>
<evidence type="ECO:0000305" key="43"/>
<evidence type="ECO:0000312" key="44">
    <source>
        <dbReference type="HGNC" id="HGNC:12862"/>
    </source>
</evidence>
<evidence type="ECO:0007744" key="45">
    <source>
    </source>
</evidence>
<evidence type="ECO:0007744" key="46">
    <source>
    </source>
</evidence>
<evidence type="ECO:0007829" key="47">
    <source>
        <dbReference type="PDB" id="4J8S"/>
    </source>
</evidence>
<keyword id="KW-0002">3D-structure</keyword>
<keyword id="KW-0963">Cytoplasm</keyword>
<keyword id="KW-0238">DNA-binding</keyword>
<keyword id="KW-0271">Exosome</keyword>
<keyword id="KW-0945">Host-virus interaction</keyword>
<keyword id="KW-0479">Metal-binding</keyword>
<keyword id="KW-0509">mRNA transport</keyword>
<keyword id="KW-0539">Nucleus</keyword>
<keyword id="KW-0597">Phosphoprotein</keyword>
<keyword id="KW-1267">Proteomics identification</keyword>
<keyword id="KW-1185">Reference proteome</keyword>
<keyword id="KW-0677">Repeat</keyword>
<keyword id="KW-0687">Ribonucleoprotein</keyword>
<keyword id="KW-0694">RNA-binding</keyword>
<keyword id="KW-0943">RNA-mediated gene silencing</keyword>
<keyword id="KW-0813">Transport</keyword>
<keyword id="KW-0832">Ubl conjugation</keyword>
<keyword id="KW-0862">Zinc</keyword>
<keyword id="KW-0863">Zinc-finger</keyword>